<comment type="function">
    <text evidence="3">Colony queen number, a major feature of social organization, is associated with worker genotype for Gp-9. Colonies are headed by either a single reproductive queen (monogyne form) or multiple queens (polygyne form). Differences in worker Gp-9 genotypes between social forms may cause differences in workers' abilities to recognize queens and regulate their numbers (By similarity).</text>
</comment>
<comment type="subunit">
    <text evidence="2">Homodimer.</text>
</comment>
<comment type="subcellular location">
    <subcellularLocation>
        <location evidence="1">Secreted</location>
    </subcellularLocation>
</comment>
<comment type="polymorphism">
    <text evidence="5">Allele B is shown, monogyne population from Argentina.</text>
</comment>
<comment type="similarity">
    <text evidence="4">Belongs to the PBP/GOBP family.</text>
</comment>
<dbReference type="EMBL" id="AY818625">
    <property type="protein sequence ID" value="AAW80692.1"/>
    <property type="molecule type" value="Genomic_DNA"/>
</dbReference>
<dbReference type="SMR" id="Q5EP06"/>
<dbReference type="GO" id="GO:0005615">
    <property type="term" value="C:extracellular space"/>
    <property type="evidence" value="ECO:0000250"/>
    <property type="project" value="UniProtKB"/>
</dbReference>
<dbReference type="GO" id="GO:0005550">
    <property type="term" value="F:pheromone binding"/>
    <property type="evidence" value="ECO:0007669"/>
    <property type="project" value="UniProtKB-KW"/>
</dbReference>
<dbReference type="GO" id="GO:0019236">
    <property type="term" value="P:response to pheromone"/>
    <property type="evidence" value="ECO:0007669"/>
    <property type="project" value="UniProtKB-KW"/>
</dbReference>
<dbReference type="GO" id="GO:0035176">
    <property type="term" value="P:social behavior"/>
    <property type="evidence" value="ECO:0000250"/>
    <property type="project" value="UniProtKB"/>
</dbReference>
<dbReference type="CDD" id="cd23992">
    <property type="entry name" value="PBP_GOBP"/>
    <property type="match status" value="1"/>
</dbReference>
<dbReference type="FunFam" id="1.10.238.20:FF:000004">
    <property type="entry name" value="Pheromone-binding protein Gp-9"/>
    <property type="match status" value="1"/>
</dbReference>
<dbReference type="Gene3D" id="1.10.238.20">
    <property type="entry name" value="Pheromone/general odorant binding protein domain"/>
    <property type="match status" value="1"/>
</dbReference>
<dbReference type="InterPro" id="IPR006170">
    <property type="entry name" value="PBP/GOBP"/>
</dbReference>
<dbReference type="InterPro" id="IPR036728">
    <property type="entry name" value="PBP_GOBP_sf"/>
</dbReference>
<dbReference type="InterPro" id="IPR022354">
    <property type="entry name" value="Pheromone-bd_protein_Gp-9"/>
</dbReference>
<dbReference type="Pfam" id="PF01395">
    <property type="entry name" value="PBP_GOBP"/>
    <property type="match status" value="1"/>
</dbReference>
<dbReference type="PRINTS" id="PR02007">
    <property type="entry name" value="ODORANTBPGP9"/>
</dbReference>
<dbReference type="SUPFAM" id="SSF47565">
    <property type="entry name" value="Insect pheromone/odorant-binding proteins"/>
    <property type="match status" value="1"/>
</dbReference>
<evidence type="ECO:0000250" key="1"/>
<evidence type="ECO:0000250" key="2">
    <source>
        <dbReference type="UniProtKB" id="P20797"/>
    </source>
</evidence>
<evidence type="ECO:0000250" key="3">
    <source>
        <dbReference type="UniProtKB" id="Q8WP90"/>
    </source>
</evidence>
<evidence type="ECO:0000255" key="4"/>
<evidence type="ECO:0000269" key="5">
    <source>
    </source>
</evidence>
<evidence type="ECO:0000305" key="6"/>
<evidence type="ECO:0000312" key="7">
    <source>
        <dbReference type="EMBL" id="AAW80692.1"/>
    </source>
</evidence>
<feature type="signal peptide" evidence="3">
    <location>
        <begin position="1"/>
        <end position="19"/>
    </location>
</feature>
<feature type="chain" id="PRO_5000094269" description="Pheromone-binding protein Gp-9" evidence="3">
    <location>
        <begin position="20"/>
        <end position="153"/>
    </location>
</feature>
<feature type="disulfide bond" evidence="2">
    <location>
        <begin position="37"/>
        <end position="77"/>
    </location>
</feature>
<feature type="disulfide bond" evidence="2">
    <location>
        <begin position="73"/>
        <end position="129"/>
    </location>
</feature>
<feature type="disulfide bond" evidence="2">
    <location>
        <begin position="118"/>
        <end position="138"/>
    </location>
</feature>
<proteinExistence type="inferred from homology"/>
<protein>
    <recommendedName>
        <fullName>Pheromone-binding protein Gp-9</fullName>
        <shortName>PBP</shortName>
    </recommendedName>
    <alternativeName>
        <fullName>Putative odorant-binding protein Gp-9</fullName>
    </alternativeName>
</protein>
<keyword id="KW-0085">Behavior</keyword>
<keyword id="KW-1015">Disulfide bond</keyword>
<keyword id="KW-0589">Pheromone response</keyword>
<keyword id="KW-0590">Pheromone-binding</keyword>
<keyword id="KW-0964">Secreted</keyword>
<keyword id="KW-0732">Signal</keyword>
<keyword id="KW-0813">Transport</keyword>
<gene>
    <name evidence="7" type="primary">Gp-9</name>
</gene>
<organism>
    <name type="scientific">Solenopsis electra</name>
    <name type="common">Fire ant</name>
    <dbReference type="NCBI Taxonomy" id="227486"/>
    <lineage>
        <taxon>Eukaryota</taxon>
        <taxon>Metazoa</taxon>
        <taxon>Ecdysozoa</taxon>
        <taxon>Arthropoda</taxon>
        <taxon>Hexapoda</taxon>
        <taxon>Insecta</taxon>
        <taxon>Pterygota</taxon>
        <taxon>Neoptera</taxon>
        <taxon>Endopterygota</taxon>
        <taxon>Hymenoptera</taxon>
        <taxon>Apocrita</taxon>
        <taxon>Aculeata</taxon>
        <taxon>Formicoidea</taxon>
        <taxon>Formicidae</taxon>
        <taxon>Myrmicinae</taxon>
        <taxon>Solenopsis</taxon>
    </lineage>
</organism>
<sequence>MKTFVLHIFIFALVAFASASRDSAKKIGSQYDNFETCLTEHGLTEDDIFSIGEVSSGQHKTNHEDTELHKNGCVMQCMLEKDGLMSGADYDEEKMREDYIKETGAQPGDQRIEALNACMQETKDMEDKCDKSLVLVACVLAAEAILADSSEAA</sequence>
<accession>Q5EP06</accession>
<name>PBGP9_SOLEE</name>
<reference evidence="6 7" key="1">
    <citation type="journal article" date="2005" name="Mol. Biol. Evol.">
        <title>Molecular evolutionary analyses of the odorant-binding protein gene Gp-9 in fire ants and other Solenopsis species.</title>
        <authorList>
            <person name="Krieger M.J.B."/>
            <person name="Ross K.G."/>
        </authorList>
    </citation>
    <scope>NUCLEOTIDE SEQUENCE [GENOMIC DNA] (ALLELE B)</scope>
</reference>